<sequence>MASQGTKRPYEQMETGGERQNATEIRASVGRMVGGIGRFYIQMCTELKLSDYEGRLIQNSITIERMVLSAFDERRNKYLEEHPSAGKDPKKTGGPIYRRRDGKWVRELILYDKEEIRRIWRQANNGEDATAGLTHLMIWHSNLNDATYQRTRALVRTGMDPRMCSLMQGSTLPRRSGAAGATVKGVGTMVMELIRMIKRGINDRNFWRGENGRRTRIAYERMCNILKGKFQTAAQRAMMDQVRESRNPGNAEIEDLIFLARSALILRGSVAHKSCLPACVYGLAVASGYDFEREGYSLVGIDPFRLLQNSQVFSLIRPNENPAHKSQLVWMACHSAAFEDLRVSSFIRGTRVAPRGQLSTRGVQIASNENMETMDSSTLELRSRYWAIRTRSGGNTNQQRASAGQISVQPTFSVQRNLPFERATIMAAFTGNTEGRTSDMRTEIIRMMENARPEDVSFQGRGVFELSDEKATNPIVPSFDMSNEGSYFFGDNAEEYEN</sequence>
<reference key="1">
    <citation type="journal article" date="2002" name="Virology">
        <title>H5N1 influenza viruses isolated from geese in Southeastern China: evidence for genetic reassortment and interspecies transmission to ducks.</title>
        <authorList>
            <person name="Guan Y."/>
            <person name="Peiris M."/>
            <person name="Kong K.F."/>
            <person name="Dyrting K.C."/>
            <person name="Ellis T.M."/>
            <person name="Sit T."/>
            <person name="Zhang L.J."/>
            <person name="Shortridge K.F."/>
        </authorList>
    </citation>
    <scope>NUCLEOTIDE SEQUENCE [GENOMIC RNA]</scope>
</reference>
<proteinExistence type="inferred from homology"/>
<organism>
    <name type="scientific">Influenza A virus (strain A/Duck/Hong Kong/2986.1/2000 H5N1 genotype C)</name>
    <dbReference type="NCBI Taxonomy" id="176674"/>
    <lineage>
        <taxon>Viruses</taxon>
        <taxon>Riboviria</taxon>
        <taxon>Orthornavirae</taxon>
        <taxon>Negarnaviricota</taxon>
        <taxon>Polyploviricotina</taxon>
        <taxon>Insthoviricetes</taxon>
        <taxon>Articulavirales</taxon>
        <taxon>Orthomyxoviridae</taxon>
        <taxon>Alphainfluenzavirus</taxon>
        <taxon>Alphainfluenzavirus influenzae</taxon>
        <taxon>Influenza A virus</taxon>
    </lineage>
</organism>
<protein>
    <recommendedName>
        <fullName evidence="1">Nucleoprotein</fullName>
    </recommendedName>
    <alternativeName>
        <fullName evidence="1">Nucleocapsid protein</fullName>
        <shortName evidence="1">Protein N</shortName>
    </alternativeName>
</protein>
<feature type="chain" id="PRO_0000310914" description="Nucleoprotein">
    <location>
        <begin position="1"/>
        <end position="498"/>
    </location>
</feature>
<feature type="region of interest" description="Disordered" evidence="2">
    <location>
        <begin position="1"/>
        <end position="22"/>
    </location>
</feature>
<feature type="short sequence motif" description="Unconventional nuclear localization signal" evidence="1">
    <location>
        <begin position="1"/>
        <end position="18"/>
    </location>
</feature>
<feature type="short sequence motif" description="Bipartite nuclear localization signal" evidence="1">
    <location>
        <begin position="198"/>
        <end position="216"/>
    </location>
</feature>
<accession>Q8QPJ5</accession>
<evidence type="ECO:0000255" key="1">
    <source>
        <dbReference type="HAMAP-Rule" id="MF_04070"/>
    </source>
</evidence>
<evidence type="ECO:0000256" key="2">
    <source>
        <dbReference type="SAM" id="MobiDB-lite"/>
    </source>
</evidence>
<keyword id="KW-0167">Capsid protein</keyword>
<keyword id="KW-1139">Helical capsid protein</keyword>
<keyword id="KW-1048">Host nucleus</keyword>
<keyword id="KW-0945">Host-virus interaction</keyword>
<keyword id="KW-0687">Ribonucleoprotein</keyword>
<keyword id="KW-0694">RNA-binding</keyword>
<keyword id="KW-0543">Viral nucleoprotein</keyword>
<keyword id="KW-1163">Viral penetration into host nucleus</keyword>
<keyword id="KW-0946">Virion</keyword>
<keyword id="KW-1160">Virus entry into host cell</keyword>
<organismHost>
    <name type="scientific">Aves</name>
    <dbReference type="NCBI Taxonomy" id="8782"/>
</organismHost>
<organismHost>
    <name type="scientific">Felis catus</name>
    <name type="common">Cat</name>
    <name type="synonym">Felis silvestris catus</name>
    <dbReference type="NCBI Taxonomy" id="9685"/>
</organismHost>
<organismHost>
    <name type="scientific">Homo sapiens</name>
    <name type="common">Human</name>
    <dbReference type="NCBI Taxonomy" id="9606"/>
</organismHost>
<organismHost>
    <name type="scientific">Panthera pardus</name>
    <name type="common">Leopard</name>
    <name type="synonym">Felis pardus</name>
    <dbReference type="NCBI Taxonomy" id="9691"/>
</organismHost>
<organismHost>
    <name type="scientific">Panthera tigris</name>
    <name type="common">Tiger</name>
    <dbReference type="NCBI Taxonomy" id="9694"/>
</organismHost>
<organismHost>
    <name type="scientific">Sus scrofa</name>
    <name type="common">Pig</name>
    <dbReference type="NCBI Taxonomy" id="9823"/>
</organismHost>
<name>NCAP_I00A0</name>
<dbReference type="EMBL" id="AY059497">
    <property type="protein sequence ID" value="AAL31403.1"/>
    <property type="molecule type" value="Genomic_RNA"/>
</dbReference>
<dbReference type="SMR" id="Q8QPJ5"/>
<dbReference type="PRO" id="PR:Q8QPJ5"/>
<dbReference type="Proteomes" id="UP000008285">
    <property type="component" value="Genome"/>
</dbReference>
<dbReference type="GO" id="GO:0019029">
    <property type="term" value="C:helical viral capsid"/>
    <property type="evidence" value="ECO:0007669"/>
    <property type="project" value="UniProtKB-UniRule"/>
</dbReference>
<dbReference type="GO" id="GO:0043657">
    <property type="term" value="C:host cell"/>
    <property type="evidence" value="ECO:0007669"/>
    <property type="project" value="GOC"/>
</dbReference>
<dbReference type="GO" id="GO:0042025">
    <property type="term" value="C:host cell nucleus"/>
    <property type="evidence" value="ECO:0007669"/>
    <property type="project" value="UniProtKB-SubCell"/>
</dbReference>
<dbReference type="GO" id="GO:1990904">
    <property type="term" value="C:ribonucleoprotein complex"/>
    <property type="evidence" value="ECO:0007669"/>
    <property type="project" value="UniProtKB-KW"/>
</dbReference>
<dbReference type="GO" id="GO:0019013">
    <property type="term" value="C:viral nucleocapsid"/>
    <property type="evidence" value="ECO:0007669"/>
    <property type="project" value="UniProtKB-UniRule"/>
</dbReference>
<dbReference type="GO" id="GO:0003723">
    <property type="term" value="F:RNA binding"/>
    <property type="evidence" value="ECO:0007669"/>
    <property type="project" value="UniProtKB-UniRule"/>
</dbReference>
<dbReference type="GO" id="GO:0005198">
    <property type="term" value="F:structural molecule activity"/>
    <property type="evidence" value="ECO:0007669"/>
    <property type="project" value="UniProtKB-UniRule"/>
</dbReference>
<dbReference type="GO" id="GO:0046718">
    <property type="term" value="P:symbiont entry into host cell"/>
    <property type="evidence" value="ECO:0007669"/>
    <property type="project" value="UniProtKB-KW"/>
</dbReference>
<dbReference type="GO" id="GO:0075732">
    <property type="term" value="P:viral penetration into host nucleus"/>
    <property type="evidence" value="ECO:0007669"/>
    <property type="project" value="UniProtKB-UniRule"/>
</dbReference>
<dbReference type="HAMAP" id="MF_04070">
    <property type="entry name" value="INFV_NCAP"/>
    <property type="match status" value="1"/>
</dbReference>
<dbReference type="InterPro" id="IPR002141">
    <property type="entry name" value="Flu_NP"/>
</dbReference>
<dbReference type="Pfam" id="PF00506">
    <property type="entry name" value="Flu_NP"/>
    <property type="match status" value="1"/>
</dbReference>
<dbReference type="SUPFAM" id="SSF161003">
    <property type="entry name" value="flu NP-like"/>
    <property type="match status" value="1"/>
</dbReference>
<gene>
    <name evidence="1" type="primary">NP</name>
</gene>
<comment type="function">
    <text evidence="1">Encapsidates the negative strand viral RNA, protecting it from nucleases. The encapsidated genomic RNA is termed the ribonucleoprotein (RNP) and serves as template for transcription and replication. The RNP needs to be localized in the host nucleus to start an infectious cycle, but is too large to diffuse through the nuclear pore complex. NP comprises at least 2 nuclear localization signals that are responsible for the active RNP import into the nucleus through cellular importin alpha/beta pathway. Later in the infection, nclear export of RNPs are mediated through viral proteins NEP interacting with M1 which binds nucleoproteins. It is possible that nucleoprotein binds directly host exportin-1/XPO1 and plays an active role in RNPs nuclear export. M1 interaction with RNP seems to hide nucleoprotein's nuclear localization signals. Soon after a virion infects a new cell, M1 dissociates from the RNP under acidification of the virion driven by M2 protein. Dissociation of M1 from RNP unmasks nucleoprotein's nuclear localization signals, targeting the RNP to the nucleus.</text>
</comment>
<comment type="subunit">
    <text evidence="1">Homomultimerizes to form the nucleocapsid. May bind host exportin-1/XPO1. Binds to viral genomic RNA. Protein-RNA contacts are mediated by a combination of electrostatic interactions between positively charged residues and the phosphate backbone and planar interactions between aromatic side chains and bases.</text>
</comment>
<comment type="subcellular location">
    <subcellularLocation>
        <location evidence="1">Virion</location>
    </subcellularLocation>
    <subcellularLocation>
        <location evidence="1">Host nucleus</location>
    </subcellularLocation>
</comment>
<comment type="PTM">
    <text evidence="1">Late in virus-infected cells, may be cleaved from a 56-kDa protein to a 53-kDa protein by a cellular caspase. This cleavage might be a marker for the onset of apoptosis in infected cells or have a specific function in virus host interaction.</text>
</comment>
<comment type="similarity">
    <text evidence="1">Belongs to the influenza viruses nucleoprotein family.</text>
</comment>